<organism>
    <name type="scientific">Solanum tuberosum</name>
    <name type="common">Potato</name>
    <dbReference type="NCBI Taxonomy" id="4113"/>
    <lineage>
        <taxon>Eukaryota</taxon>
        <taxon>Viridiplantae</taxon>
        <taxon>Streptophyta</taxon>
        <taxon>Embryophyta</taxon>
        <taxon>Tracheophyta</taxon>
        <taxon>Spermatophyta</taxon>
        <taxon>Magnoliopsida</taxon>
        <taxon>eudicotyledons</taxon>
        <taxon>Gunneridae</taxon>
        <taxon>Pentapetalae</taxon>
        <taxon>asterids</taxon>
        <taxon>lamiids</taxon>
        <taxon>Solanales</taxon>
        <taxon>Solanaceae</taxon>
        <taxon>Solanoideae</taxon>
        <taxon>Solaneae</taxon>
        <taxon>Solanum</taxon>
    </lineage>
</organism>
<keyword id="KW-0963">Cytoplasm</keyword>
<keyword id="KW-0521">NADP</keyword>
<keyword id="KW-0560">Oxidoreductase</keyword>
<keyword id="KW-1185">Reference proteome</keyword>
<dbReference type="EC" id="1.3.1.-"/>
<dbReference type="EMBL" id="X92075">
    <property type="protein sequence ID" value="CAA63056.1"/>
    <property type="molecule type" value="mRNA"/>
</dbReference>
<dbReference type="PIR" id="T07386">
    <property type="entry name" value="T07386"/>
</dbReference>
<dbReference type="RefSeq" id="NP_001274923.1">
    <property type="nucleotide sequence ID" value="NM_001287994.1"/>
</dbReference>
<dbReference type="SMR" id="P52578"/>
<dbReference type="FunCoup" id="P52578">
    <property type="interactions" value="115"/>
</dbReference>
<dbReference type="STRING" id="4113.P52578"/>
<dbReference type="PaxDb" id="4113-PGSC0003DMT400084271"/>
<dbReference type="GeneID" id="102586164"/>
<dbReference type="KEGG" id="sot:102586164"/>
<dbReference type="eggNOG" id="ENOG502QPMY">
    <property type="taxonomic scope" value="Eukaryota"/>
</dbReference>
<dbReference type="InParanoid" id="P52578"/>
<dbReference type="OrthoDB" id="419598at2759"/>
<dbReference type="Proteomes" id="UP000011115">
    <property type="component" value="Unassembled WGS sequence"/>
</dbReference>
<dbReference type="ExpressionAtlas" id="P52578">
    <property type="expression patterns" value="baseline and differential"/>
</dbReference>
<dbReference type="GO" id="GO:0005737">
    <property type="term" value="C:cytoplasm"/>
    <property type="evidence" value="ECO:0007669"/>
    <property type="project" value="UniProtKB-SubCell"/>
</dbReference>
<dbReference type="GO" id="GO:0016491">
    <property type="term" value="F:oxidoreductase activity"/>
    <property type="evidence" value="ECO:0007669"/>
    <property type="project" value="UniProtKB-KW"/>
</dbReference>
<dbReference type="CDD" id="cd05259">
    <property type="entry name" value="PCBER_SDR_a"/>
    <property type="match status" value="1"/>
</dbReference>
<dbReference type="Gene3D" id="3.40.50.720">
    <property type="entry name" value="NAD(P)-binding Rossmann-like Domain"/>
    <property type="match status" value="1"/>
</dbReference>
<dbReference type="Gene3D" id="3.90.25.10">
    <property type="entry name" value="UDP-galactose 4-epimerase, domain 1"/>
    <property type="match status" value="1"/>
</dbReference>
<dbReference type="InterPro" id="IPR036291">
    <property type="entry name" value="NAD(P)-bd_dom_sf"/>
</dbReference>
<dbReference type="InterPro" id="IPR008030">
    <property type="entry name" value="NmrA-like"/>
</dbReference>
<dbReference type="InterPro" id="IPR050608">
    <property type="entry name" value="NmrA-type/Isoflavone_red_sf"/>
</dbReference>
<dbReference type="InterPro" id="IPR045312">
    <property type="entry name" value="PCBER-like"/>
</dbReference>
<dbReference type="PANTHER" id="PTHR43349:SF35">
    <property type="entry name" value="PHENYLCOUMARAN BENZYLIC ETHER REDUCTASE 1"/>
    <property type="match status" value="1"/>
</dbReference>
<dbReference type="PANTHER" id="PTHR43349">
    <property type="entry name" value="PINORESINOL REDUCTASE-RELATED"/>
    <property type="match status" value="1"/>
</dbReference>
<dbReference type="Pfam" id="PF05368">
    <property type="entry name" value="NmrA"/>
    <property type="match status" value="1"/>
</dbReference>
<dbReference type="SUPFAM" id="SSF51735">
    <property type="entry name" value="NAD(P)-binding Rossmann-fold domains"/>
    <property type="match status" value="1"/>
</dbReference>
<evidence type="ECO:0000250" key="1"/>
<evidence type="ECO:0000250" key="2">
    <source>
        <dbReference type="UniProtKB" id="Q9LD14"/>
    </source>
</evidence>
<evidence type="ECO:0000305" key="3"/>
<name>IFRH_SOLTU</name>
<feature type="chain" id="PRO_0000204550" description="Isoflavone reductase homolog">
    <location>
        <begin position="1"/>
        <end position="308"/>
    </location>
</feature>
<feature type="active site" description="Proton acceptor" evidence="2">
    <location>
        <position position="133"/>
    </location>
</feature>
<feature type="binding site" evidence="2">
    <location>
        <begin position="11"/>
        <end position="17"/>
    </location>
    <ligand>
        <name>NADP(+)</name>
        <dbReference type="ChEBI" id="CHEBI:58349"/>
    </ligand>
</feature>
<feature type="binding site" evidence="2">
    <location>
        <position position="36"/>
    </location>
    <ligand>
        <name>NADP(+)</name>
        <dbReference type="ChEBI" id="CHEBI:58349"/>
    </ligand>
</feature>
<feature type="binding site" evidence="2">
    <location>
        <position position="45"/>
    </location>
    <ligand>
        <name>NADP(+)</name>
        <dbReference type="ChEBI" id="CHEBI:58349"/>
    </ligand>
</feature>
<feature type="binding site" evidence="2">
    <location>
        <position position="137"/>
    </location>
    <ligand>
        <name>NADP(+)</name>
        <dbReference type="ChEBI" id="CHEBI:58349"/>
    </ligand>
</feature>
<protein>
    <recommendedName>
        <fullName>Isoflavone reductase homolog</fullName>
        <ecNumber>1.3.1.-</ecNumber>
    </recommendedName>
    <alternativeName>
        <fullName>CP100</fullName>
    </alternativeName>
</protein>
<sequence>MAGKSKILFIGGTGYIGKFIVEASAKAGHDTFVLVRESTLSNPTKTKLIDTFKSFGVTFVHGDLYDHESLVKAIKQVDVVISTVGHALLADQVKLIAAIKEAGNVKRFFPSEFGNDVDRVHAVEPAKAAFNTKAQIRRVVEAEGIPFTYVATFFFAGYSLPNLAQPGAAGPPNDKVVILGHGNTKAVFNKEEDIGTYTINAVDDPKTLNKILYIKPPHNIITLNELVSLWEKKTGKNLERLYVPEEQVLKNIQEASVPMNVGLSIYHTAFVKGDHTNFEIEPSFGVEASEVYPDVKYTPIDEILNQYV</sequence>
<comment type="subcellular location">
    <subcellularLocation>
        <location evidence="1">Cytoplasm</location>
    </subcellularLocation>
</comment>
<comment type="similarity">
    <text evidence="3">Belongs to the NmrA-type oxidoreductase family. Isoflavone reductase subfamily.</text>
</comment>
<accession>P52578</accession>
<proteinExistence type="evidence at transcript level"/>
<reference key="1">
    <citation type="journal article" date="1997" name="Plant Mol. Biol.">
        <title>Expression of an isoflavone reductase-like gene enhanced by pollen tube growth in pistils of Solanum tuberosum.</title>
        <authorList>
            <person name="van Eldik G.J."/>
            <person name="Ruiter R.K."/>
            <person name="Colla P.H."/>
            <person name="van Herpen M.M.A."/>
            <person name="Schrauwen J.A.M."/>
            <person name="Wullems G.J."/>
        </authorList>
    </citation>
    <scope>NUCLEOTIDE SEQUENCE [MRNA]</scope>
</reference>